<proteinExistence type="inferred from homology"/>
<protein>
    <recommendedName>
        <fullName>Cytochrome b</fullName>
    </recommendedName>
    <alternativeName>
        <fullName>Complex III subunit 3</fullName>
    </alternativeName>
    <alternativeName>
        <fullName>Complex III subunit III</fullName>
    </alternativeName>
    <alternativeName>
        <fullName>Cytochrome b-c1 complex subunit 3</fullName>
    </alternativeName>
    <alternativeName>
        <fullName>Ubiquinol-cytochrome-c reductase complex cytochrome b subunit</fullName>
    </alternativeName>
</protein>
<geneLocation type="mitochondrion"/>
<reference key="1">
    <citation type="journal article" date="1998" name="Mol. Biol. Evol.">
        <title>Body size effects and rates of cytochrome-b evolution in tube-nosed seabirds.</title>
        <authorList>
            <person name="Nunn G.B."/>
            <person name="Stanley S.E."/>
        </authorList>
    </citation>
    <scope>NUCLEOTIDE SEQUENCE [GENOMIC DNA]</scope>
    <source>
        <strain>Isolate BBSP-MI-2</strain>
    </source>
</reference>
<accession>O79200</accession>
<feature type="chain" id="PRO_0000060979" description="Cytochrome b">
    <location>
        <begin position="1"/>
        <end position="380"/>
    </location>
</feature>
<feature type="transmembrane region" description="Helical" evidence="2">
    <location>
        <begin position="34"/>
        <end position="54"/>
    </location>
</feature>
<feature type="transmembrane region" description="Helical" evidence="2">
    <location>
        <begin position="78"/>
        <end position="99"/>
    </location>
</feature>
<feature type="transmembrane region" description="Helical" evidence="2">
    <location>
        <begin position="114"/>
        <end position="134"/>
    </location>
</feature>
<feature type="transmembrane region" description="Helical" evidence="2">
    <location>
        <begin position="179"/>
        <end position="199"/>
    </location>
</feature>
<feature type="transmembrane region" description="Helical" evidence="2">
    <location>
        <begin position="227"/>
        <end position="247"/>
    </location>
</feature>
<feature type="transmembrane region" description="Helical" evidence="2">
    <location>
        <begin position="289"/>
        <end position="309"/>
    </location>
</feature>
<feature type="transmembrane region" description="Helical" evidence="2">
    <location>
        <begin position="321"/>
        <end position="341"/>
    </location>
</feature>
<feature type="transmembrane region" description="Helical" evidence="2">
    <location>
        <begin position="348"/>
        <end position="368"/>
    </location>
</feature>
<feature type="binding site" description="axial binding residue" evidence="2">
    <location>
        <position position="84"/>
    </location>
    <ligand>
        <name>heme b</name>
        <dbReference type="ChEBI" id="CHEBI:60344"/>
        <label>b562</label>
    </ligand>
    <ligandPart>
        <name>Fe</name>
        <dbReference type="ChEBI" id="CHEBI:18248"/>
    </ligandPart>
</feature>
<feature type="binding site" description="axial binding residue" evidence="2">
    <location>
        <position position="98"/>
    </location>
    <ligand>
        <name>heme b</name>
        <dbReference type="ChEBI" id="CHEBI:60344"/>
        <label>b566</label>
    </ligand>
    <ligandPart>
        <name>Fe</name>
        <dbReference type="ChEBI" id="CHEBI:18248"/>
    </ligandPart>
</feature>
<feature type="binding site" description="axial binding residue" evidence="2">
    <location>
        <position position="183"/>
    </location>
    <ligand>
        <name>heme b</name>
        <dbReference type="ChEBI" id="CHEBI:60344"/>
        <label>b562</label>
    </ligand>
    <ligandPart>
        <name>Fe</name>
        <dbReference type="ChEBI" id="CHEBI:18248"/>
    </ligandPart>
</feature>
<feature type="binding site" description="axial binding residue" evidence="2">
    <location>
        <position position="197"/>
    </location>
    <ligand>
        <name>heme b</name>
        <dbReference type="ChEBI" id="CHEBI:60344"/>
        <label>b566</label>
    </ligand>
    <ligandPart>
        <name>Fe</name>
        <dbReference type="ChEBI" id="CHEBI:18248"/>
    </ligandPart>
</feature>
<feature type="binding site" evidence="2">
    <location>
        <position position="202"/>
    </location>
    <ligand>
        <name>a ubiquinone</name>
        <dbReference type="ChEBI" id="CHEBI:16389"/>
    </ligand>
</feature>
<dbReference type="EMBL" id="AF076053">
    <property type="protein sequence ID" value="AAC68610.1"/>
    <property type="molecule type" value="Genomic_DNA"/>
</dbReference>
<dbReference type="SMR" id="O79200"/>
<dbReference type="GO" id="GO:0005743">
    <property type="term" value="C:mitochondrial inner membrane"/>
    <property type="evidence" value="ECO:0007669"/>
    <property type="project" value="UniProtKB-SubCell"/>
</dbReference>
<dbReference type="GO" id="GO:0045275">
    <property type="term" value="C:respiratory chain complex III"/>
    <property type="evidence" value="ECO:0007669"/>
    <property type="project" value="InterPro"/>
</dbReference>
<dbReference type="GO" id="GO:0046872">
    <property type="term" value="F:metal ion binding"/>
    <property type="evidence" value="ECO:0007669"/>
    <property type="project" value="UniProtKB-KW"/>
</dbReference>
<dbReference type="GO" id="GO:0008121">
    <property type="term" value="F:ubiquinol-cytochrome-c reductase activity"/>
    <property type="evidence" value="ECO:0007669"/>
    <property type="project" value="InterPro"/>
</dbReference>
<dbReference type="GO" id="GO:0006122">
    <property type="term" value="P:mitochondrial electron transport, ubiquinol to cytochrome c"/>
    <property type="evidence" value="ECO:0007669"/>
    <property type="project" value="TreeGrafter"/>
</dbReference>
<dbReference type="CDD" id="cd00290">
    <property type="entry name" value="cytochrome_b_C"/>
    <property type="match status" value="1"/>
</dbReference>
<dbReference type="CDD" id="cd00284">
    <property type="entry name" value="Cytochrome_b_N"/>
    <property type="match status" value="1"/>
</dbReference>
<dbReference type="FunFam" id="1.20.810.10:FF:000002">
    <property type="entry name" value="Cytochrome b"/>
    <property type="match status" value="1"/>
</dbReference>
<dbReference type="Gene3D" id="1.20.810.10">
    <property type="entry name" value="Cytochrome Bc1 Complex, Chain C"/>
    <property type="match status" value="1"/>
</dbReference>
<dbReference type="InterPro" id="IPR005798">
    <property type="entry name" value="Cyt_b/b6_C"/>
</dbReference>
<dbReference type="InterPro" id="IPR036150">
    <property type="entry name" value="Cyt_b/b6_C_sf"/>
</dbReference>
<dbReference type="InterPro" id="IPR005797">
    <property type="entry name" value="Cyt_b/b6_N"/>
</dbReference>
<dbReference type="InterPro" id="IPR027387">
    <property type="entry name" value="Cytb/b6-like_sf"/>
</dbReference>
<dbReference type="InterPro" id="IPR030689">
    <property type="entry name" value="Cytochrome_b"/>
</dbReference>
<dbReference type="InterPro" id="IPR048260">
    <property type="entry name" value="Cytochrome_b_C_euk/bac"/>
</dbReference>
<dbReference type="InterPro" id="IPR048259">
    <property type="entry name" value="Cytochrome_b_N_euk/bac"/>
</dbReference>
<dbReference type="InterPro" id="IPR016174">
    <property type="entry name" value="Di-haem_cyt_TM"/>
</dbReference>
<dbReference type="PANTHER" id="PTHR19271">
    <property type="entry name" value="CYTOCHROME B"/>
    <property type="match status" value="1"/>
</dbReference>
<dbReference type="PANTHER" id="PTHR19271:SF16">
    <property type="entry name" value="CYTOCHROME B"/>
    <property type="match status" value="1"/>
</dbReference>
<dbReference type="Pfam" id="PF00032">
    <property type="entry name" value="Cytochrom_B_C"/>
    <property type="match status" value="1"/>
</dbReference>
<dbReference type="Pfam" id="PF00033">
    <property type="entry name" value="Cytochrome_B"/>
    <property type="match status" value="1"/>
</dbReference>
<dbReference type="PIRSF" id="PIRSF038885">
    <property type="entry name" value="COB"/>
    <property type="match status" value="1"/>
</dbReference>
<dbReference type="SUPFAM" id="SSF81648">
    <property type="entry name" value="a domain/subunit of cytochrome bc1 complex (Ubiquinol-cytochrome c reductase)"/>
    <property type="match status" value="1"/>
</dbReference>
<dbReference type="SUPFAM" id="SSF81342">
    <property type="entry name" value="Transmembrane di-heme cytochromes"/>
    <property type="match status" value="1"/>
</dbReference>
<dbReference type="PROSITE" id="PS51003">
    <property type="entry name" value="CYTB_CTER"/>
    <property type="match status" value="1"/>
</dbReference>
<dbReference type="PROSITE" id="PS51002">
    <property type="entry name" value="CYTB_NTER"/>
    <property type="match status" value="1"/>
</dbReference>
<sequence length="380" mass="42566">MAPNLRKSHPLLKMVNNSLIDLPTPPNISAWWNFGSLLGICLTTQILTGLLLAMHYTADTTLAFSSVAHTCRNVQYGWLIRNIHANGASFFFICIYLHIGRGLYYGSYLYKETWNTGILLLLTLMATAFVGYVLPWGQMSFWGATVITNLFSAIPYIGQTIVEWAWGGFSVDNPTLTRFFALHFLLPFMIAGLTLIHLTFLHESGSNNPLGIVSNCDKIPFHPYFSLKDTLGFMLMLLPLTTLALFSPNLLGDPENFTPANPLVTPPHIKPEWYFLFAYAILRSIPNKLGGVLALAASVLILFLSPLLHKSKQRTMAFRPLSQLLFWILIANLFILTWVGSQPVEHPFIIIGQLASLTYFTILLILLPITGALENKMLNY</sequence>
<comment type="function">
    <text evidence="2">Component of the ubiquinol-cytochrome c reductase complex (complex III or cytochrome b-c1 complex) that is part of the mitochondrial respiratory chain. The b-c1 complex mediates electron transfer from ubiquinol to cytochrome c. Contributes to the generation of a proton gradient across the mitochondrial membrane that is then used for ATP synthesis.</text>
</comment>
<comment type="cofactor">
    <cofactor evidence="2">
        <name>heme b</name>
        <dbReference type="ChEBI" id="CHEBI:60344"/>
    </cofactor>
    <text evidence="2">Binds 2 heme b groups non-covalently.</text>
</comment>
<comment type="subunit">
    <text evidence="2">The cytochrome bc1 complex contains 11 subunits: 3 respiratory subunits (MT-CYB, CYC1 and UQCRFS1), 2 core proteins (UQCRC1 and UQCRC2) and 6 low-molecular weight proteins (UQCRH/QCR6, UQCRB/QCR7, UQCRQ/QCR8, UQCR10/QCR9, UQCR11/QCR10 and a cleavage product of UQCRFS1). This cytochrome bc1 complex then forms a dimer.</text>
</comment>
<comment type="subcellular location">
    <subcellularLocation>
        <location evidence="2">Mitochondrion inner membrane</location>
        <topology evidence="2">Multi-pass membrane protein</topology>
    </subcellularLocation>
</comment>
<comment type="miscellaneous">
    <text evidence="1">Heme 1 (or BL or b562) is low-potential and absorbs at about 562 nm, and heme 2 (or BH or b566) is high-potential and absorbs at about 566 nm.</text>
</comment>
<comment type="similarity">
    <text evidence="3 4">Belongs to the cytochrome b family.</text>
</comment>
<comment type="caution">
    <text evidence="2">The full-length protein contains only eight transmembrane helices, not nine as predicted by bioinformatics tools.</text>
</comment>
<evidence type="ECO:0000250" key="1"/>
<evidence type="ECO:0000250" key="2">
    <source>
        <dbReference type="UniProtKB" id="P00157"/>
    </source>
</evidence>
<evidence type="ECO:0000255" key="3">
    <source>
        <dbReference type="PROSITE-ProRule" id="PRU00967"/>
    </source>
</evidence>
<evidence type="ECO:0000255" key="4">
    <source>
        <dbReference type="PROSITE-ProRule" id="PRU00968"/>
    </source>
</evidence>
<keyword id="KW-0249">Electron transport</keyword>
<keyword id="KW-0349">Heme</keyword>
<keyword id="KW-0408">Iron</keyword>
<keyword id="KW-0472">Membrane</keyword>
<keyword id="KW-0479">Metal-binding</keyword>
<keyword id="KW-0496">Mitochondrion</keyword>
<keyword id="KW-0999">Mitochondrion inner membrane</keyword>
<keyword id="KW-0679">Respiratory chain</keyword>
<keyword id="KW-0812">Transmembrane</keyword>
<keyword id="KW-1133">Transmembrane helix</keyword>
<keyword id="KW-0813">Transport</keyword>
<keyword id="KW-0830">Ubiquinone</keyword>
<name>CYB_FRETR</name>
<gene>
    <name type="primary">MT-CYB</name>
    <name type="synonym">COB</name>
    <name type="synonym">CYTB</name>
    <name type="synonym">MTCYB</name>
</gene>
<organism>
    <name type="scientific">Fregetta tropica</name>
    <name type="common">Black-bellied storm-petrel</name>
    <name type="synonym">Thalassidroma tropica</name>
    <dbReference type="NCBI Taxonomy" id="37073"/>
    <lineage>
        <taxon>Eukaryota</taxon>
        <taxon>Metazoa</taxon>
        <taxon>Chordata</taxon>
        <taxon>Craniata</taxon>
        <taxon>Vertebrata</taxon>
        <taxon>Euteleostomi</taxon>
        <taxon>Archelosauria</taxon>
        <taxon>Archosauria</taxon>
        <taxon>Dinosauria</taxon>
        <taxon>Saurischia</taxon>
        <taxon>Theropoda</taxon>
        <taxon>Coelurosauria</taxon>
        <taxon>Aves</taxon>
        <taxon>Neognathae</taxon>
        <taxon>Neoaves</taxon>
        <taxon>Aequornithes</taxon>
        <taxon>Procellariiformes</taxon>
        <taxon>Hydrobatidae</taxon>
        <taxon>Fregetta</taxon>
    </lineage>
</organism>